<keyword id="KW-0030">Aminoacyl-tRNA synthetase</keyword>
<keyword id="KW-0067">ATP-binding</keyword>
<keyword id="KW-0963">Cytoplasm</keyword>
<keyword id="KW-0436">Ligase</keyword>
<keyword id="KW-0547">Nucleotide-binding</keyword>
<keyword id="KW-0648">Protein biosynthesis</keyword>
<sequence length="568" mass="64167">MNIFKQISSLIFSKLNELKQRGVISTSAANFIIEPPSNRVHGDIYTNVAMVLAKHEKKNPIEIAEVLAKEFELFDEVAKVEIAGSGFINMHLKIEVWHGILKQINELKTEFGTLDIGNNQAINVEFVSANPTGPLHIGHARGAVFGDVLANLLKKVGYKVTKEYYINDAGAQIDTLIRSVYLRYKEALGEKISIEKGLYPGEYLKPIGTGLAKKYGAELLEKQDNQVIRDYTLSSILEIIKEDMNLLGVNHDVFTSEYELQKSGKIEESIKILSDKGLVYEGYLEKPKGKESENWTSRKEMLFRSTKFGDDVDRALKKEDGSWTYFASDIAYHFDKISRGFNNMIVELGSDHGGYVKRLKAVVSALSDDQAKIEVKLHNIVNFFENGKPVKMSKRSGNFLTARDVVEEVGRDITRFIMLTRKNDMVLDFDFAKVKEQSKDNPIFYVQYAHARAHSLMRNAPKELPTADPSLLRTGGELFLIKTLAKWPDVVEIAARLCEPHRITFYLLEVAEAFHVLWGYGKSDLNMRFILEDNLNLTAARMFLVQALAHVIASGLSIFNIEPLEEMS</sequence>
<proteinExistence type="inferred from homology"/>
<protein>
    <recommendedName>
        <fullName evidence="1">Arginine--tRNA ligase</fullName>
        <ecNumber evidence="1">6.1.1.19</ecNumber>
    </recommendedName>
    <alternativeName>
        <fullName evidence="1">Arginyl-tRNA synthetase</fullName>
        <shortName evidence="1">ArgRS</shortName>
    </alternativeName>
</protein>
<name>SYR_WOLPM</name>
<evidence type="ECO:0000255" key="1">
    <source>
        <dbReference type="HAMAP-Rule" id="MF_00123"/>
    </source>
</evidence>
<dbReference type="EC" id="6.1.1.19" evidence="1"/>
<dbReference type="EMBL" id="AE017196">
    <property type="protein sequence ID" value="AAS14127.1"/>
    <property type="molecule type" value="Genomic_DNA"/>
</dbReference>
<dbReference type="RefSeq" id="WP_010962564.1">
    <property type="nucleotide sequence ID" value="NZ_OX384529.1"/>
</dbReference>
<dbReference type="SMR" id="Q73HY6"/>
<dbReference type="EnsemblBacteria" id="AAS14127">
    <property type="protein sequence ID" value="AAS14127"/>
    <property type="gene ID" value="WD_0402"/>
</dbReference>
<dbReference type="GeneID" id="70035897"/>
<dbReference type="KEGG" id="wol:WD_0402"/>
<dbReference type="eggNOG" id="COG0018">
    <property type="taxonomic scope" value="Bacteria"/>
</dbReference>
<dbReference type="Proteomes" id="UP000008215">
    <property type="component" value="Chromosome"/>
</dbReference>
<dbReference type="GO" id="GO:0005737">
    <property type="term" value="C:cytoplasm"/>
    <property type="evidence" value="ECO:0007669"/>
    <property type="project" value="UniProtKB-SubCell"/>
</dbReference>
<dbReference type="GO" id="GO:0004814">
    <property type="term" value="F:arginine-tRNA ligase activity"/>
    <property type="evidence" value="ECO:0007669"/>
    <property type="project" value="UniProtKB-UniRule"/>
</dbReference>
<dbReference type="GO" id="GO:0005524">
    <property type="term" value="F:ATP binding"/>
    <property type="evidence" value="ECO:0007669"/>
    <property type="project" value="UniProtKB-UniRule"/>
</dbReference>
<dbReference type="GO" id="GO:0006420">
    <property type="term" value="P:arginyl-tRNA aminoacylation"/>
    <property type="evidence" value="ECO:0007669"/>
    <property type="project" value="UniProtKB-UniRule"/>
</dbReference>
<dbReference type="CDD" id="cd00671">
    <property type="entry name" value="ArgRS_core"/>
    <property type="match status" value="1"/>
</dbReference>
<dbReference type="Gene3D" id="3.30.1360.70">
    <property type="entry name" value="Arginyl tRNA synthetase N-terminal domain"/>
    <property type="match status" value="1"/>
</dbReference>
<dbReference type="Gene3D" id="3.40.50.620">
    <property type="entry name" value="HUPs"/>
    <property type="match status" value="1"/>
</dbReference>
<dbReference type="Gene3D" id="1.10.730.10">
    <property type="entry name" value="Isoleucyl-tRNA Synthetase, Domain 1"/>
    <property type="match status" value="1"/>
</dbReference>
<dbReference type="HAMAP" id="MF_00123">
    <property type="entry name" value="Arg_tRNA_synth"/>
    <property type="match status" value="1"/>
</dbReference>
<dbReference type="InterPro" id="IPR001412">
    <property type="entry name" value="aa-tRNA-synth_I_CS"/>
</dbReference>
<dbReference type="InterPro" id="IPR001278">
    <property type="entry name" value="Arg-tRNA-ligase"/>
</dbReference>
<dbReference type="InterPro" id="IPR005148">
    <property type="entry name" value="Arg-tRNA-synth_N"/>
</dbReference>
<dbReference type="InterPro" id="IPR036695">
    <property type="entry name" value="Arg-tRNA-synth_N_sf"/>
</dbReference>
<dbReference type="InterPro" id="IPR035684">
    <property type="entry name" value="ArgRS_core"/>
</dbReference>
<dbReference type="InterPro" id="IPR008909">
    <property type="entry name" value="DALR_anticod-bd"/>
</dbReference>
<dbReference type="InterPro" id="IPR014729">
    <property type="entry name" value="Rossmann-like_a/b/a_fold"/>
</dbReference>
<dbReference type="InterPro" id="IPR009080">
    <property type="entry name" value="tRNAsynth_Ia_anticodon-bd"/>
</dbReference>
<dbReference type="NCBIfam" id="TIGR00456">
    <property type="entry name" value="argS"/>
    <property type="match status" value="1"/>
</dbReference>
<dbReference type="PANTHER" id="PTHR11956:SF5">
    <property type="entry name" value="ARGININE--TRNA LIGASE, CYTOPLASMIC"/>
    <property type="match status" value="1"/>
</dbReference>
<dbReference type="PANTHER" id="PTHR11956">
    <property type="entry name" value="ARGINYL-TRNA SYNTHETASE"/>
    <property type="match status" value="1"/>
</dbReference>
<dbReference type="Pfam" id="PF03485">
    <property type="entry name" value="Arg_tRNA_synt_N"/>
    <property type="match status" value="1"/>
</dbReference>
<dbReference type="Pfam" id="PF05746">
    <property type="entry name" value="DALR_1"/>
    <property type="match status" value="1"/>
</dbReference>
<dbReference type="Pfam" id="PF00750">
    <property type="entry name" value="tRNA-synt_1d"/>
    <property type="match status" value="1"/>
</dbReference>
<dbReference type="PRINTS" id="PR01038">
    <property type="entry name" value="TRNASYNTHARG"/>
</dbReference>
<dbReference type="SMART" id="SM01016">
    <property type="entry name" value="Arg_tRNA_synt_N"/>
    <property type="match status" value="1"/>
</dbReference>
<dbReference type="SMART" id="SM00836">
    <property type="entry name" value="DALR_1"/>
    <property type="match status" value="1"/>
</dbReference>
<dbReference type="SUPFAM" id="SSF47323">
    <property type="entry name" value="Anticodon-binding domain of a subclass of class I aminoacyl-tRNA synthetases"/>
    <property type="match status" value="1"/>
</dbReference>
<dbReference type="SUPFAM" id="SSF55190">
    <property type="entry name" value="Arginyl-tRNA synthetase (ArgRS), N-terminal 'additional' domain"/>
    <property type="match status" value="1"/>
</dbReference>
<dbReference type="SUPFAM" id="SSF52374">
    <property type="entry name" value="Nucleotidylyl transferase"/>
    <property type="match status" value="1"/>
</dbReference>
<dbReference type="PROSITE" id="PS00178">
    <property type="entry name" value="AA_TRNA_LIGASE_I"/>
    <property type="match status" value="1"/>
</dbReference>
<reference key="1">
    <citation type="journal article" date="2004" name="PLoS Biol.">
        <title>Phylogenomics of the reproductive parasite Wolbachia pipientis wMel: a streamlined genome overrun by mobile genetic elements.</title>
        <authorList>
            <person name="Wu M."/>
            <person name="Sun L.V."/>
            <person name="Vamathevan J.J."/>
            <person name="Riegler M."/>
            <person name="DeBoy R.T."/>
            <person name="Brownlie J.C."/>
            <person name="McGraw E.A."/>
            <person name="Martin W."/>
            <person name="Esser C."/>
            <person name="Ahmadinejad N."/>
            <person name="Wiegand C."/>
            <person name="Madupu R."/>
            <person name="Beanan M.J."/>
            <person name="Brinkac L.M."/>
            <person name="Daugherty S.C."/>
            <person name="Durkin A.S."/>
            <person name="Kolonay J.F."/>
            <person name="Nelson W.C."/>
            <person name="Mohamoud Y."/>
            <person name="Lee P."/>
            <person name="Berry K.J."/>
            <person name="Young M.B."/>
            <person name="Utterback T.R."/>
            <person name="Weidman J.F."/>
            <person name="Nierman W.C."/>
            <person name="Paulsen I.T."/>
            <person name="Nelson K.E."/>
            <person name="Tettelin H."/>
            <person name="O'Neill S.L."/>
            <person name="Eisen J.A."/>
        </authorList>
    </citation>
    <scope>NUCLEOTIDE SEQUENCE [LARGE SCALE GENOMIC DNA]</scope>
</reference>
<gene>
    <name evidence="1" type="primary">argS</name>
    <name type="ordered locus">WD_0402</name>
</gene>
<comment type="catalytic activity">
    <reaction evidence="1">
        <text>tRNA(Arg) + L-arginine + ATP = L-arginyl-tRNA(Arg) + AMP + diphosphate</text>
        <dbReference type="Rhea" id="RHEA:20301"/>
        <dbReference type="Rhea" id="RHEA-COMP:9658"/>
        <dbReference type="Rhea" id="RHEA-COMP:9673"/>
        <dbReference type="ChEBI" id="CHEBI:30616"/>
        <dbReference type="ChEBI" id="CHEBI:32682"/>
        <dbReference type="ChEBI" id="CHEBI:33019"/>
        <dbReference type="ChEBI" id="CHEBI:78442"/>
        <dbReference type="ChEBI" id="CHEBI:78513"/>
        <dbReference type="ChEBI" id="CHEBI:456215"/>
        <dbReference type="EC" id="6.1.1.19"/>
    </reaction>
</comment>
<comment type="subunit">
    <text evidence="1">Monomer.</text>
</comment>
<comment type="subcellular location">
    <subcellularLocation>
        <location evidence="1">Cytoplasm</location>
    </subcellularLocation>
</comment>
<comment type="similarity">
    <text evidence="1">Belongs to the class-I aminoacyl-tRNA synthetase family.</text>
</comment>
<organism>
    <name type="scientific">Wolbachia pipientis wMel</name>
    <dbReference type="NCBI Taxonomy" id="163164"/>
    <lineage>
        <taxon>Bacteria</taxon>
        <taxon>Pseudomonadati</taxon>
        <taxon>Pseudomonadota</taxon>
        <taxon>Alphaproteobacteria</taxon>
        <taxon>Rickettsiales</taxon>
        <taxon>Anaplasmataceae</taxon>
        <taxon>Wolbachieae</taxon>
        <taxon>Wolbachia</taxon>
    </lineage>
</organism>
<feature type="chain" id="PRO_0000242120" description="Arginine--tRNA ligase">
    <location>
        <begin position="1"/>
        <end position="568"/>
    </location>
</feature>
<feature type="short sequence motif" description="'HIGH' region">
    <location>
        <begin position="129"/>
        <end position="139"/>
    </location>
</feature>
<accession>Q73HY6</accession>